<accession>Q38X86</accession>
<dbReference type="EC" id="4.2.3.4" evidence="1"/>
<dbReference type="EMBL" id="CR936503">
    <property type="protein sequence ID" value="CAI55195.1"/>
    <property type="molecule type" value="Genomic_DNA"/>
</dbReference>
<dbReference type="RefSeq" id="WP_011374596.1">
    <property type="nucleotide sequence ID" value="NC_007576.1"/>
</dbReference>
<dbReference type="SMR" id="Q38X86"/>
<dbReference type="STRING" id="314315.LCA_0894"/>
<dbReference type="KEGG" id="lsa:LCA_0894"/>
<dbReference type="eggNOG" id="COG0337">
    <property type="taxonomic scope" value="Bacteria"/>
</dbReference>
<dbReference type="HOGENOM" id="CLU_001201_0_1_9"/>
<dbReference type="OrthoDB" id="9806583at2"/>
<dbReference type="UniPathway" id="UPA00053">
    <property type="reaction ID" value="UER00085"/>
</dbReference>
<dbReference type="Proteomes" id="UP000002707">
    <property type="component" value="Chromosome"/>
</dbReference>
<dbReference type="GO" id="GO:0005737">
    <property type="term" value="C:cytoplasm"/>
    <property type="evidence" value="ECO:0007669"/>
    <property type="project" value="UniProtKB-SubCell"/>
</dbReference>
<dbReference type="GO" id="GO:0003856">
    <property type="term" value="F:3-dehydroquinate synthase activity"/>
    <property type="evidence" value="ECO:0007669"/>
    <property type="project" value="UniProtKB-UniRule"/>
</dbReference>
<dbReference type="GO" id="GO:0046872">
    <property type="term" value="F:metal ion binding"/>
    <property type="evidence" value="ECO:0007669"/>
    <property type="project" value="UniProtKB-KW"/>
</dbReference>
<dbReference type="GO" id="GO:0000166">
    <property type="term" value="F:nucleotide binding"/>
    <property type="evidence" value="ECO:0007669"/>
    <property type="project" value="UniProtKB-KW"/>
</dbReference>
<dbReference type="GO" id="GO:0008652">
    <property type="term" value="P:amino acid biosynthetic process"/>
    <property type="evidence" value="ECO:0007669"/>
    <property type="project" value="UniProtKB-KW"/>
</dbReference>
<dbReference type="GO" id="GO:0009073">
    <property type="term" value="P:aromatic amino acid family biosynthetic process"/>
    <property type="evidence" value="ECO:0007669"/>
    <property type="project" value="UniProtKB-KW"/>
</dbReference>
<dbReference type="GO" id="GO:0009423">
    <property type="term" value="P:chorismate biosynthetic process"/>
    <property type="evidence" value="ECO:0007669"/>
    <property type="project" value="UniProtKB-UniRule"/>
</dbReference>
<dbReference type="CDD" id="cd08195">
    <property type="entry name" value="DHQS"/>
    <property type="match status" value="1"/>
</dbReference>
<dbReference type="FunFam" id="3.40.50.1970:FF:000001">
    <property type="entry name" value="3-dehydroquinate synthase"/>
    <property type="match status" value="1"/>
</dbReference>
<dbReference type="Gene3D" id="3.40.50.1970">
    <property type="match status" value="1"/>
</dbReference>
<dbReference type="Gene3D" id="1.20.1090.10">
    <property type="entry name" value="Dehydroquinate synthase-like - alpha domain"/>
    <property type="match status" value="1"/>
</dbReference>
<dbReference type="HAMAP" id="MF_00110">
    <property type="entry name" value="DHQ_synthase"/>
    <property type="match status" value="1"/>
</dbReference>
<dbReference type="InterPro" id="IPR050071">
    <property type="entry name" value="Dehydroquinate_synthase"/>
</dbReference>
<dbReference type="InterPro" id="IPR016037">
    <property type="entry name" value="DHQ_synth_AroB"/>
</dbReference>
<dbReference type="InterPro" id="IPR030963">
    <property type="entry name" value="DHQ_synth_fam"/>
</dbReference>
<dbReference type="InterPro" id="IPR030960">
    <property type="entry name" value="DHQS/DOIS_N"/>
</dbReference>
<dbReference type="InterPro" id="IPR056179">
    <property type="entry name" value="DHQS_C"/>
</dbReference>
<dbReference type="NCBIfam" id="TIGR01357">
    <property type="entry name" value="aroB"/>
    <property type="match status" value="1"/>
</dbReference>
<dbReference type="PANTHER" id="PTHR43622">
    <property type="entry name" value="3-DEHYDROQUINATE SYNTHASE"/>
    <property type="match status" value="1"/>
</dbReference>
<dbReference type="PANTHER" id="PTHR43622:SF7">
    <property type="entry name" value="3-DEHYDROQUINATE SYNTHASE, CHLOROPLASTIC"/>
    <property type="match status" value="1"/>
</dbReference>
<dbReference type="Pfam" id="PF01761">
    <property type="entry name" value="DHQ_synthase"/>
    <property type="match status" value="1"/>
</dbReference>
<dbReference type="Pfam" id="PF24621">
    <property type="entry name" value="DHQS_C"/>
    <property type="match status" value="1"/>
</dbReference>
<dbReference type="PIRSF" id="PIRSF001455">
    <property type="entry name" value="DHQ_synth"/>
    <property type="match status" value="1"/>
</dbReference>
<dbReference type="SUPFAM" id="SSF56796">
    <property type="entry name" value="Dehydroquinate synthase-like"/>
    <property type="match status" value="1"/>
</dbReference>
<reference key="1">
    <citation type="journal article" date="2005" name="Nat. Biotechnol.">
        <title>The complete genome sequence of the meat-borne lactic acid bacterium Lactobacillus sakei 23K.</title>
        <authorList>
            <person name="Chaillou S."/>
            <person name="Champomier-Verges M.-C."/>
            <person name="Cornet M."/>
            <person name="Crutz-Le Coq A.-M."/>
            <person name="Dudez A.-M."/>
            <person name="Martin V."/>
            <person name="Beaufils S."/>
            <person name="Darbon-Rongere E."/>
            <person name="Bossy R."/>
            <person name="Loux V."/>
            <person name="Zagorec M."/>
        </authorList>
    </citation>
    <scope>NUCLEOTIDE SEQUENCE [LARGE SCALE GENOMIC DNA]</scope>
    <source>
        <strain>23K</strain>
    </source>
</reference>
<organism>
    <name type="scientific">Latilactobacillus sakei subsp. sakei (strain 23K)</name>
    <name type="common">Lactobacillus sakei subsp. sakei</name>
    <dbReference type="NCBI Taxonomy" id="314315"/>
    <lineage>
        <taxon>Bacteria</taxon>
        <taxon>Bacillati</taxon>
        <taxon>Bacillota</taxon>
        <taxon>Bacilli</taxon>
        <taxon>Lactobacillales</taxon>
        <taxon>Lactobacillaceae</taxon>
        <taxon>Latilactobacillus</taxon>
    </lineage>
</organism>
<keyword id="KW-0028">Amino-acid biosynthesis</keyword>
<keyword id="KW-0057">Aromatic amino acid biosynthesis</keyword>
<keyword id="KW-0170">Cobalt</keyword>
<keyword id="KW-0963">Cytoplasm</keyword>
<keyword id="KW-0456">Lyase</keyword>
<keyword id="KW-0479">Metal-binding</keyword>
<keyword id="KW-0520">NAD</keyword>
<keyword id="KW-0547">Nucleotide-binding</keyword>
<keyword id="KW-1185">Reference proteome</keyword>
<keyword id="KW-0862">Zinc</keyword>
<feature type="chain" id="PRO_0000231093" description="3-dehydroquinate synthase">
    <location>
        <begin position="1"/>
        <end position="355"/>
    </location>
</feature>
<feature type="binding site" evidence="1">
    <location>
        <begin position="106"/>
        <end position="110"/>
    </location>
    <ligand>
        <name>NAD(+)</name>
        <dbReference type="ChEBI" id="CHEBI:57540"/>
    </ligand>
</feature>
<feature type="binding site" evidence="1">
    <location>
        <begin position="130"/>
        <end position="131"/>
    </location>
    <ligand>
        <name>NAD(+)</name>
        <dbReference type="ChEBI" id="CHEBI:57540"/>
    </ligand>
</feature>
<feature type="binding site" evidence="1">
    <location>
        <position position="143"/>
    </location>
    <ligand>
        <name>NAD(+)</name>
        <dbReference type="ChEBI" id="CHEBI:57540"/>
    </ligand>
</feature>
<feature type="binding site" evidence="1">
    <location>
        <position position="152"/>
    </location>
    <ligand>
        <name>NAD(+)</name>
        <dbReference type="ChEBI" id="CHEBI:57540"/>
    </ligand>
</feature>
<feature type="binding site" evidence="1">
    <location>
        <position position="185"/>
    </location>
    <ligand>
        <name>Zn(2+)</name>
        <dbReference type="ChEBI" id="CHEBI:29105"/>
    </ligand>
</feature>
<feature type="binding site" evidence="1">
    <location>
        <position position="246"/>
    </location>
    <ligand>
        <name>Zn(2+)</name>
        <dbReference type="ChEBI" id="CHEBI:29105"/>
    </ligand>
</feature>
<feature type="binding site" evidence="1">
    <location>
        <position position="262"/>
    </location>
    <ligand>
        <name>Zn(2+)</name>
        <dbReference type="ChEBI" id="CHEBI:29105"/>
    </ligand>
</feature>
<comment type="function">
    <text evidence="1">Catalyzes the conversion of 3-deoxy-D-arabino-heptulosonate 7-phosphate (DAHP) to dehydroquinate (DHQ).</text>
</comment>
<comment type="catalytic activity">
    <reaction evidence="1">
        <text>7-phospho-2-dehydro-3-deoxy-D-arabino-heptonate = 3-dehydroquinate + phosphate</text>
        <dbReference type="Rhea" id="RHEA:21968"/>
        <dbReference type="ChEBI" id="CHEBI:32364"/>
        <dbReference type="ChEBI" id="CHEBI:43474"/>
        <dbReference type="ChEBI" id="CHEBI:58394"/>
        <dbReference type="EC" id="4.2.3.4"/>
    </reaction>
</comment>
<comment type="cofactor">
    <cofactor evidence="1">
        <name>Co(2+)</name>
        <dbReference type="ChEBI" id="CHEBI:48828"/>
    </cofactor>
    <cofactor evidence="1">
        <name>Zn(2+)</name>
        <dbReference type="ChEBI" id="CHEBI:29105"/>
    </cofactor>
    <text evidence="1">Binds 1 divalent metal cation per subunit. Can use either Co(2+) or Zn(2+).</text>
</comment>
<comment type="cofactor">
    <cofactor evidence="1">
        <name>NAD(+)</name>
        <dbReference type="ChEBI" id="CHEBI:57540"/>
    </cofactor>
</comment>
<comment type="pathway">
    <text evidence="1">Metabolic intermediate biosynthesis; chorismate biosynthesis; chorismate from D-erythrose 4-phosphate and phosphoenolpyruvate: step 2/7.</text>
</comment>
<comment type="subcellular location">
    <subcellularLocation>
        <location evidence="1">Cytoplasm</location>
    </subcellularLocation>
</comment>
<comment type="similarity">
    <text evidence="1">Belongs to the sugar phosphate cyclases superfamily. Dehydroquinate synthase family.</text>
</comment>
<name>AROB_LATSS</name>
<sequence length="355" mass="38358">MPTISVNLTTQKYQIKIENGLATSIGREVQRVWSVRKIALVTDTIVGPLYQAQITEQLTQAGFQVTVLTIPAGESAKSLEQAMSLYEALLTANFNRSDGLIALGGGVVGDLTGFVASTYMRGLPFIQIPTSLLAQVDSSVGGKTAVDLPAGKNLVGTFYQPELVLIDPQMLETLPQRQLVTGYAEVVKIAALVGADFWNLVQQIESPTAILDKAPELIARSIAYKAQIVMADVQESGQRRLLNFGHTIGHAVESLADGELTHGEAVSIGLIAISRLFEQPTQIAAQLQTVLERVGLPVTHPLLQSPALFEKIAHDKKNQGALINIVYLKAIGQPTILQLPLTQFSAQLKMKQRSF</sequence>
<gene>
    <name evidence="1" type="primary">aroB</name>
    <name type="ordered locus">LCA_0894</name>
</gene>
<evidence type="ECO:0000255" key="1">
    <source>
        <dbReference type="HAMAP-Rule" id="MF_00110"/>
    </source>
</evidence>
<proteinExistence type="inferred from homology"/>
<protein>
    <recommendedName>
        <fullName evidence="1">3-dehydroquinate synthase</fullName>
        <shortName evidence="1">DHQS</shortName>
        <ecNumber evidence="1">4.2.3.4</ecNumber>
    </recommendedName>
</protein>